<gene>
    <name type="primary">Il17a</name>
    <name type="synonym">Ctla8</name>
    <name type="synonym">Il17</name>
</gene>
<comment type="function">
    <text evidence="3">Effector cytokine of innate and adaptive immune system involved in antimicrobial host defense and maintenance of tissue integrity. Signals via IL17RA-IL17RC heterodimeric receptor complex, triggering homotypic interaction of IL17RA and IL17RC chains with TRAF3IP2 adapter. This leads to downstream TRAF6-mediated activation of NF-kappa-B and MAPkinase pathways ultimately resulting in transcriptional activation of cytokines, chemokines, antimicrobial peptides and matrix metalloproteinases, with potential strong immune inflammation. Plays an important role in connecting T cell-mediated adaptive immunity and acute inflammatory response to destroy extracellular bacteria and fungi. As a signature effector cytokine of T-helper 17 cells (Th17), primarily induces neutrophil activation and recruitment at infection and inflammatory sites. In airway epithelium, mediates neutrophil chemotaxis via induction of CXCL1 and CXCL5 chemokines. In secondary lymphoid organs, contributes to germinal center formation by regulating the chemotactic response of B cells to CXCL12 and CXCL13, enhancing retention of B cells within the germinal centers, B cell somatic hypermutation rate and selection toward plasma cells. Effector cytokine of a subset of gamma-delta T cells that functions as part of an inflammatory circuit downstream IL1B, TLR2 and IL23A-IL12B to promote neutrophil recruitment for efficient bacterial clearance. Effector cytokine of innate immune cells including invariant natural killer cell (iNKT) and group 3 innate lymphoid cells that mediate initial neutrophilic inflammation. Involved in the maintenance of the integrity of epithelial barriers during homeostasis and pathogen infection. Upon acute injury, has a direct role in epithelial barrier formation by regulating OCLN localization and tight junction biogenesis. As part of the mucosal immune response induced by commensal bacteria, enhances host's ability to resist pathogenic bacterial and fungal infections by promoting neutrophil recruitment and antimicrobial peptides release. In synergy with IL17F, mediates the production of antimicrobial beta-defensins DEFB1, DEFB103A, and DEFB104A by mucosal epithelial cells, limiting the entry of microbes through the epithelial barriers. Involved in antiviral host defense through various mechanisms.</text>
</comment>
<comment type="subunit">
    <text evidence="2">Homodimer. Forms complexes with IL17RA and IL17RC receptors with 2:1 binding stoichiometry: two receptor chains for one interleukin molecule. IL17A homodimer preferentially drives the formation of IL17RA-IL17RC heterodimeric receptor complex. IL17A homodimer adopts an asymmetrical ternary structure with one IL17RA molecule, allowing for high affinity interactions of one IL17A monomer with one IL17RA molecule (via D1 and D2 domains), while disfavoring binding of a second IL17RA molecule on the other IL17A monomer. Heterodimer with IL17F. IL17A-IL17F forms complexes with IL17RA-IL17RC, but with lower affinity when compared to IL17A homodimer. IL17RA and IL17RC chains cannot distinguish between IL17A and IL17F molecules, potentially enabling the formation of topologically distinct complexes.</text>
</comment>
<comment type="subcellular location">
    <subcellularLocation>
        <location evidence="3">Secreted</location>
    </subcellularLocation>
</comment>
<comment type="similarity">
    <text evidence="6">Belongs to the IL-17 family.</text>
</comment>
<comment type="caution">
    <text evidence="7">Was originally thought to be from mouse but, on the basis of subsequent work (PubMed:8654948, PubMed:8877732) has been shown to be of rat origin.</text>
</comment>
<accession>Q61453</accession>
<name>IL17_RAT</name>
<protein>
    <recommendedName>
        <fullName>Interleukin-17A</fullName>
        <shortName>IL-17</shortName>
        <shortName>IL-17A</shortName>
    </recommendedName>
    <alternativeName>
        <fullName>Cytotoxic T-lymphocyte-associated antigen 8</fullName>
        <shortName>CTLA-8</shortName>
    </alternativeName>
</protein>
<reference key="1">
    <citation type="journal article" date="1993" name="J. Immunol.">
        <title>CTLA-8, cloned from an activated T cell, bearing AU-rich messenger RNA instability sequences, and homologous to a herpesvirus saimiri gene.</title>
        <authorList>
            <person name="Rouvier E."/>
            <person name="Luciani M.-F."/>
            <person name="Mattei M.-G."/>
            <person name="Denizot F."/>
            <person name="Golstein P."/>
        </authorList>
    </citation>
    <scope>NUCLEOTIDE SEQUENCE [MRNA]</scope>
</reference>
<reference key="2">
    <citation type="journal article" date="1996" name="Gene">
        <title>Complete nucleotide sequence of the mouse CTLA8 gene.</title>
        <authorList>
            <person name="Yao Z."/>
            <person name="Timour M."/>
            <person name="Painter S."/>
            <person name="Fanslow W."/>
            <person name="Spriggs M.K."/>
        </authorList>
    </citation>
    <scope>ORGANISM IDENTIFICATION</scope>
</reference>
<reference key="3">
    <citation type="journal article" date="1996" name="J. Interferon Cytokine Res.">
        <title>Mouse IL-17: a cytokine preferentially expressed by alpha beta TCR + CD4-CD8-T cells.</title>
        <authorList>
            <person name="Kennedy J."/>
            <person name="Rossi D.L."/>
            <person name="Zurawski S.M."/>
            <person name="Vega F. Jr."/>
            <person name="Kastelein R.A."/>
            <person name="Wagner J.L."/>
            <person name="Hannum C.H."/>
            <person name="Zlotnik A."/>
        </authorList>
    </citation>
    <scope>NUCLEOTIDE SEQUENCE [MRNA]</scope>
    <scope>ORGANISM IDENTIFICATION</scope>
</reference>
<feature type="signal peptide" evidence="4">
    <location>
        <begin position="1"/>
        <end position="17"/>
    </location>
</feature>
<feature type="chain" id="PRO_0000015425" description="Interleukin-17A">
    <location>
        <begin position="18"/>
        <end position="150"/>
    </location>
</feature>
<feature type="region of interest" description="Disordered" evidence="5">
    <location>
        <begin position="54"/>
        <end position="75"/>
    </location>
</feature>
<feature type="compositionally biased region" description="Polar residues" evidence="5">
    <location>
        <begin position="62"/>
        <end position="72"/>
    </location>
</feature>
<feature type="glycosylation site" description="N-linked (GlcNAc...) asparagine" evidence="4">
    <location>
        <position position="63"/>
    </location>
</feature>
<feature type="disulfide bond" evidence="1">
    <location>
        <begin position="89"/>
        <end position="139"/>
    </location>
</feature>
<feature type="disulfide bond" evidence="1">
    <location>
        <begin position="94"/>
        <end position="141"/>
    </location>
</feature>
<feature type="sequence conflict" description="In Ref. 3." evidence="6" ref="3">
    <original>I</original>
    <variation>L</variation>
    <location>
        <position position="46"/>
    </location>
</feature>
<keyword id="KW-1064">Adaptive immunity</keyword>
<keyword id="KW-0202">Cytokine</keyword>
<keyword id="KW-1015">Disulfide bond</keyword>
<keyword id="KW-0325">Glycoprotein</keyword>
<keyword id="KW-0391">Immunity</keyword>
<keyword id="KW-0395">Inflammatory response</keyword>
<keyword id="KW-0399">Innate immunity</keyword>
<keyword id="KW-1185">Reference proteome</keyword>
<keyword id="KW-0964">Secreted</keyword>
<keyword id="KW-0732">Signal</keyword>
<sequence>MCLMLLLLLNLEATVKAAVLIPQSSVCPNAEANNFLQNVKVNLKVINSLSSKASSRRPSDYLNRSTSPWTLSRNEDPDRYPSVIWEAQCRHQRCVNAEGKLDHHMNSVLIQQEILVLKREPEKCPFTFRVEKMLVGVGCTCVSSIVRHAS</sequence>
<organism>
    <name type="scientific">Rattus norvegicus</name>
    <name type="common">Rat</name>
    <dbReference type="NCBI Taxonomy" id="10116"/>
    <lineage>
        <taxon>Eukaryota</taxon>
        <taxon>Metazoa</taxon>
        <taxon>Chordata</taxon>
        <taxon>Craniata</taxon>
        <taxon>Vertebrata</taxon>
        <taxon>Euteleostomi</taxon>
        <taxon>Mammalia</taxon>
        <taxon>Eutheria</taxon>
        <taxon>Euarchontoglires</taxon>
        <taxon>Glires</taxon>
        <taxon>Rodentia</taxon>
        <taxon>Myomorpha</taxon>
        <taxon>Muroidea</taxon>
        <taxon>Muridae</taxon>
        <taxon>Murinae</taxon>
        <taxon>Rattus</taxon>
    </lineage>
</organism>
<dbReference type="EMBL" id="L13839">
    <property type="protein sequence ID" value="AAA37490.1"/>
    <property type="molecule type" value="mRNA"/>
</dbReference>
<dbReference type="SMR" id="Q61453"/>
<dbReference type="FunCoup" id="Q61453">
    <property type="interactions" value="5"/>
</dbReference>
<dbReference type="STRING" id="10116.ENSRNOP00000016664"/>
<dbReference type="GlyCosmos" id="Q61453">
    <property type="glycosylation" value="1 site, No reported glycans"/>
</dbReference>
<dbReference type="GlyGen" id="Q61453">
    <property type="glycosylation" value="1 site"/>
</dbReference>
<dbReference type="PhosphoSitePlus" id="Q61453"/>
<dbReference type="PaxDb" id="10116-ENSRNOP00000016664"/>
<dbReference type="AGR" id="RGD:2888"/>
<dbReference type="RGD" id="2888">
    <property type="gene designation" value="Il17a"/>
</dbReference>
<dbReference type="eggNOG" id="ENOG502S5A0">
    <property type="taxonomic scope" value="Eukaryota"/>
</dbReference>
<dbReference type="InParanoid" id="Q61453"/>
<dbReference type="PhylomeDB" id="Q61453"/>
<dbReference type="PRO" id="PR:Q61453"/>
<dbReference type="Proteomes" id="UP000002494">
    <property type="component" value="Unplaced"/>
</dbReference>
<dbReference type="GO" id="GO:0009897">
    <property type="term" value="C:external side of plasma membrane"/>
    <property type="evidence" value="ECO:0000266"/>
    <property type="project" value="RGD"/>
</dbReference>
<dbReference type="GO" id="GO:0005615">
    <property type="term" value="C:extracellular space"/>
    <property type="evidence" value="ECO:0000314"/>
    <property type="project" value="RGD"/>
</dbReference>
<dbReference type="GO" id="GO:0005125">
    <property type="term" value="F:cytokine activity"/>
    <property type="evidence" value="ECO:0000266"/>
    <property type="project" value="RGD"/>
</dbReference>
<dbReference type="GO" id="GO:0046982">
    <property type="term" value="F:protein heterodimerization activity"/>
    <property type="evidence" value="ECO:0000266"/>
    <property type="project" value="RGD"/>
</dbReference>
<dbReference type="GO" id="GO:0042803">
    <property type="term" value="F:protein homodimerization activity"/>
    <property type="evidence" value="ECO:0000266"/>
    <property type="project" value="RGD"/>
</dbReference>
<dbReference type="GO" id="GO:0002250">
    <property type="term" value="P:adaptive immune response"/>
    <property type="evidence" value="ECO:0007669"/>
    <property type="project" value="UniProtKB-KW"/>
</dbReference>
<dbReference type="GO" id="GO:0071385">
    <property type="term" value="P:cellular response to glucocorticoid stimulus"/>
    <property type="evidence" value="ECO:0000315"/>
    <property type="project" value="RGD"/>
</dbReference>
<dbReference type="GO" id="GO:0071347">
    <property type="term" value="P:cellular response to interleukin-1"/>
    <property type="evidence" value="ECO:0000266"/>
    <property type="project" value="RGD"/>
</dbReference>
<dbReference type="GO" id="GO:0050832">
    <property type="term" value="P:defense response to fungus"/>
    <property type="evidence" value="ECO:0000266"/>
    <property type="project" value="RGD"/>
</dbReference>
<dbReference type="GO" id="GO:0050829">
    <property type="term" value="P:defense response to Gram-negative bacterium"/>
    <property type="evidence" value="ECO:0000266"/>
    <property type="project" value="RGD"/>
</dbReference>
<dbReference type="GO" id="GO:0050830">
    <property type="term" value="P:defense response to Gram-positive bacterium"/>
    <property type="evidence" value="ECO:0000266"/>
    <property type="project" value="RGD"/>
</dbReference>
<dbReference type="GO" id="GO:0072537">
    <property type="term" value="P:fibroblast activation"/>
    <property type="evidence" value="ECO:0000266"/>
    <property type="project" value="RGD"/>
</dbReference>
<dbReference type="GO" id="GO:0010467">
    <property type="term" value="P:gene expression"/>
    <property type="evidence" value="ECO:0000266"/>
    <property type="project" value="RGD"/>
</dbReference>
<dbReference type="GO" id="GO:0097530">
    <property type="term" value="P:granulocyte migration"/>
    <property type="evidence" value="ECO:0000266"/>
    <property type="project" value="RGD"/>
</dbReference>
<dbReference type="GO" id="GO:0006954">
    <property type="term" value="P:inflammatory response"/>
    <property type="evidence" value="ECO:0007669"/>
    <property type="project" value="UniProtKB-KW"/>
</dbReference>
<dbReference type="GO" id="GO:0045087">
    <property type="term" value="P:innate immune response"/>
    <property type="evidence" value="ECO:0007669"/>
    <property type="project" value="UniProtKB-KW"/>
</dbReference>
<dbReference type="GO" id="GO:0097400">
    <property type="term" value="P:interleukin-17-mediated signaling pathway"/>
    <property type="evidence" value="ECO:0000266"/>
    <property type="project" value="RGD"/>
</dbReference>
<dbReference type="GO" id="GO:0038173">
    <property type="term" value="P:interleukin-17A-mediated signaling pathway"/>
    <property type="evidence" value="ECO:0000266"/>
    <property type="project" value="RGD"/>
</dbReference>
<dbReference type="GO" id="GO:0060729">
    <property type="term" value="P:intestinal epithelial structure maintenance"/>
    <property type="evidence" value="ECO:0000266"/>
    <property type="project" value="RGD"/>
</dbReference>
<dbReference type="GO" id="GO:0030216">
    <property type="term" value="P:keratinocyte differentiation"/>
    <property type="evidence" value="ECO:0000266"/>
    <property type="project" value="RGD"/>
</dbReference>
<dbReference type="GO" id="GO:0043616">
    <property type="term" value="P:keratinocyte proliferation"/>
    <property type="evidence" value="ECO:0000266"/>
    <property type="project" value="RGD"/>
</dbReference>
<dbReference type="GO" id="GO:0106015">
    <property type="term" value="P:negative regulation of inflammatory response to wounding"/>
    <property type="evidence" value="ECO:0000266"/>
    <property type="project" value="RGD"/>
</dbReference>
<dbReference type="GO" id="GO:0007219">
    <property type="term" value="P:Notch signaling pathway"/>
    <property type="evidence" value="ECO:0000266"/>
    <property type="project" value="RGD"/>
</dbReference>
<dbReference type="GO" id="GO:0002225">
    <property type="term" value="P:positive regulation of antimicrobial peptide production"/>
    <property type="evidence" value="ECO:0000266"/>
    <property type="project" value="RGD"/>
</dbReference>
<dbReference type="GO" id="GO:1903348">
    <property type="term" value="P:positive regulation of bicellular tight junction assembly"/>
    <property type="evidence" value="ECO:0000266"/>
    <property type="project" value="RGD"/>
</dbReference>
<dbReference type="GO" id="GO:2000340">
    <property type="term" value="P:positive regulation of chemokine (C-X-C motif) ligand 1 production"/>
    <property type="evidence" value="ECO:0000266"/>
    <property type="project" value="RGD"/>
</dbReference>
<dbReference type="GO" id="GO:1900017">
    <property type="term" value="P:positive regulation of cytokine production involved in inflammatory response"/>
    <property type="evidence" value="ECO:0000266"/>
    <property type="project" value="RGD"/>
</dbReference>
<dbReference type="GO" id="GO:0032731">
    <property type="term" value="P:positive regulation of interleukin-1 beta production"/>
    <property type="evidence" value="ECO:0000266"/>
    <property type="project" value="RGD"/>
</dbReference>
<dbReference type="GO" id="GO:0032735">
    <property type="term" value="P:positive regulation of interleukin-12 production"/>
    <property type="evidence" value="ECO:0000266"/>
    <property type="project" value="RGD"/>
</dbReference>
<dbReference type="GO" id="GO:0032739">
    <property type="term" value="P:positive regulation of interleukin-16 production"/>
    <property type="evidence" value="ECO:0000266"/>
    <property type="project" value="RGD"/>
</dbReference>
<dbReference type="GO" id="GO:0032747">
    <property type="term" value="P:positive regulation of interleukin-23 production"/>
    <property type="evidence" value="ECO:0000266"/>
    <property type="project" value="RGD"/>
</dbReference>
<dbReference type="GO" id="GO:0032755">
    <property type="term" value="P:positive regulation of interleukin-6 production"/>
    <property type="evidence" value="ECO:0000266"/>
    <property type="project" value="RGD"/>
</dbReference>
<dbReference type="GO" id="GO:0045672">
    <property type="term" value="P:positive regulation of osteoclast differentiation"/>
    <property type="evidence" value="ECO:0000266"/>
    <property type="project" value="RGD"/>
</dbReference>
<dbReference type="GO" id="GO:0045944">
    <property type="term" value="P:positive regulation of transcription by RNA polymerase II"/>
    <property type="evidence" value="ECO:0000314"/>
    <property type="project" value="RGD"/>
</dbReference>
<dbReference type="GO" id="GO:0032760">
    <property type="term" value="P:positive regulation of tumor necrosis factor production"/>
    <property type="evidence" value="ECO:0000266"/>
    <property type="project" value="RGD"/>
</dbReference>
<dbReference type="GO" id="GO:0043200">
    <property type="term" value="P:response to amino acid"/>
    <property type="evidence" value="ECO:0000270"/>
    <property type="project" value="RGD"/>
</dbReference>
<dbReference type="GO" id="GO:0009611">
    <property type="term" value="P:response to wounding"/>
    <property type="evidence" value="ECO:0000266"/>
    <property type="project" value="RGD"/>
</dbReference>
<dbReference type="FunFam" id="2.10.90.10:FF:000038">
    <property type="entry name" value="Interleukin-17A"/>
    <property type="match status" value="1"/>
</dbReference>
<dbReference type="Gene3D" id="2.10.90.10">
    <property type="entry name" value="Cystine-knot cytokines"/>
    <property type="match status" value="1"/>
</dbReference>
<dbReference type="InterPro" id="IPR029034">
    <property type="entry name" value="Cystine-knot_cytokine"/>
</dbReference>
<dbReference type="InterPro" id="IPR020440">
    <property type="entry name" value="IL-17_chr"/>
</dbReference>
<dbReference type="InterPro" id="IPR010345">
    <property type="entry name" value="IL-17_fam"/>
</dbReference>
<dbReference type="Pfam" id="PF06083">
    <property type="entry name" value="IL17"/>
    <property type="match status" value="1"/>
</dbReference>
<dbReference type="PRINTS" id="PR01932">
    <property type="entry name" value="INTRLEUKIN17"/>
</dbReference>
<dbReference type="SUPFAM" id="SSF57501">
    <property type="entry name" value="Cystine-knot cytokines"/>
    <property type="match status" value="1"/>
</dbReference>
<evidence type="ECO:0000250" key="1"/>
<evidence type="ECO:0000250" key="2">
    <source>
        <dbReference type="UniProtKB" id="Q16552"/>
    </source>
</evidence>
<evidence type="ECO:0000250" key="3">
    <source>
        <dbReference type="UniProtKB" id="Q62386"/>
    </source>
</evidence>
<evidence type="ECO:0000255" key="4"/>
<evidence type="ECO:0000256" key="5">
    <source>
        <dbReference type="SAM" id="MobiDB-lite"/>
    </source>
</evidence>
<evidence type="ECO:0000305" key="6"/>
<evidence type="ECO:0000305" key="7">
    <source>
    </source>
</evidence>
<proteinExistence type="evidence at transcript level"/>